<keyword id="KW-0067">ATP-binding</keyword>
<keyword id="KW-0143">Chaperone</keyword>
<keyword id="KW-0479">Metal-binding</keyword>
<keyword id="KW-0547">Nucleotide-binding</keyword>
<keyword id="KW-0862">Zinc</keyword>
<feature type="chain" id="PRO_1000024647" description="ATP-dependent Clp protease ATP-binding subunit ClpX">
    <location>
        <begin position="1"/>
        <end position="423"/>
    </location>
</feature>
<feature type="domain" description="ClpX-type ZB" evidence="2">
    <location>
        <begin position="2"/>
        <end position="56"/>
    </location>
</feature>
<feature type="binding site" evidence="2">
    <location>
        <position position="15"/>
    </location>
    <ligand>
        <name>Zn(2+)</name>
        <dbReference type="ChEBI" id="CHEBI:29105"/>
    </ligand>
</feature>
<feature type="binding site" evidence="2">
    <location>
        <position position="18"/>
    </location>
    <ligand>
        <name>Zn(2+)</name>
        <dbReference type="ChEBI" id="CHEBI:29105"/>
    </ligand>
</feature>
<feature type="binding site" evidence="2">
    <location>
        <position position="37"/>
    </location>
    <ligand>
        <name>Zn(2+)</name>
        <dbReference type="ChEBI" id="CHEBI:29105"/>
    </ligand>
</feature>
<feature type="binding site" evidence="2">
    <location>
        <position position="40"/>
    </location>
    <ligand>
        <name>Zn(2+)</name>
        <dbReference type="ChEBI" id="CHEBI:29105"/>
    </ligand>
</feature>
<feature type="binding site" evidence="1">
    <location>
        <begin position="120"/>
        <end position="127"/>
    </location>
    <ligand>
        <name>ATP</name>
        <dbReference type="ChEBI" id="CHEBI:30616"/>
    </ligand>
</feature>
<name>CLPX_SALCH</name>
<accession>Q57SB4</accession>
<proteinExistence type="inferred from homology"/>
<dbReference type="EMBL" id="AE017220">
    <property type="protein sequence ID" value="AAX64397.1"/>
    <property type="molecule type" value="Genomic_DNA"/>
</dbReference>
<dbReference type="RefSeq" id="WP_000130314.1">
    <property type="nucleotide sequence ID" value="NC_006905.1"/>
</dbReference>
<dbReference type="SMR" id="Q57SB4"/>
<dbReference type="KEGG" id="sec:SCH_0491"/>
<dbReference type="HOGENOM" id="CLU_014218_8_2_6"/>
<dbReference type="Proteomes" id="UP000000538">
    <property type="component" value="Chromosome"/>
</dbReference>
<dbReference type="GO" id="GO:0009376">
    <property type="term" value="C:HslUV protease complex"/>
    <property type="evidence" value="ECO:0007669"/>
    <property type="project" value="TreeGrafter"/>
</dbReference>
<dbReference type="GO" id="GO:0005524">
    <property type="term" value="F:ATP binding"/>
    <property type="evidence" value="ECO:0007669"/>
    <property type="project" value="UniProtKB-UniRule"/>
</dbReference>
<dbReference type="GO" id="GO:0016887">
    <property type="term" value="F:ATP hydrolysis activity"/>
    <property type="evidence" value="ECO:0007669"/>
    <property type="project" value="InterPro"/>
</dbReference>
<dbReference type="GO" id="GO:0140662">
    <property type="term" value="F:ATP-dependent protein folding chaperone"/>
    <property type="evidence" value="ECO:0007669"/>
    <property type="project" value="InterPro"/>
</dbReference>
<dbReference type="GO" id="GO:0046983">
    <property type="term" value="F:protein dimerization activity"/>
    <property type="evidence" value="ECO:0007669"/>
    <property type="project" value="InterPro"/>
</dbReference>
<dbReference type="GO" id="GO:0051082">
    <property type="term" value="F:unfolded protein binding"/>
    <property type="evidence" value="ECO:0007669"/>
    <property type="project" value="UniProtKB-UniRule"/>
</dbReference>
<dbReference type="GO" id="GO:0008270">
    <property type="term" value="F:zinc ion binding"/>
    <property type="evidence" value="ECO:0007669"/>
    <property type="project" value="InterPro"/>
</dbReference>
<dbReference type="GO" id="GO:0051301">
    <property type="term" value="P:cell division"/>
    <property type="evidence" value="ECO:0007669"/>
    <property type="project" value="TreeGrafter"/>
</dbReference>
<dbReference type="GO" id="GO:0051603">
    <property type="term" value="P:proteolysis involved in protein catabolic process"/>
    <property type="evidence" value="ECO:0007669"/>
    <property type="project" value="TreeGrafter"/>
</dbReference>
<dbReference type="CDD" id="cd19497">
    <property type="entry name" value="RecA-like_ClpX"/>
    <property type="match status" value="1"/>
</dbReference>
<dbReference type="FunFam" id="1.10.8.60:FF:000002">
    <property type="entry name" value="ATP-dependent Clp protease ATP-binding subunit ClpX"/>
    <property type="match status" value="1"/>
</dbReference>
<dbReference type="FunFam" id="3.40.50.300:FF:000005">
    <property type="entry name" value="ATP-dependent Clp protease ATP-binding subunit ClpX"/>
    <property type="match status" value="1"/>
</dbReference>
<dbReference type="Gene3D" id="1.10.8.60">
    <property type="match status" value="1"/>
</dbReference>
<dbReference type="Gene3D" id="6.20.220.10">
    <property type="entry name" value="ClpX chaperone, C4-type zinc finger domain"/>
    <property type="match status" value="1"/>
</dbReference>
<dbReference type="Gene3D" id="3.40.50.300">
    <property type="entry name" value="P-loop containing nucleotide triphosphate hydrolases"/>
    <property type="match status" value="1"/>
</dbReference>
<dbReference type="HAMAP" id="MF_00175">
    <property type="entry name" value="ClpX"/>
    <property type="match status" value="1"/>
</dbReference>
<dbReference type="InterPro" id="IPR003593">
    <property type="entry name" value="AAA+_ATPase"/>
</dbReference>
<dbReference type="InterPro" id="IPR050052">
    <property type="entry name" value="ATP-dep_Clp_protease_ClpX"/>
</dbReference>
<dbReference type="InterPro" id="IPR003959">
    <property type="entry name" value="ATPase_AAA_core"/>
</dbReference>
<dbReference type="InterPro" id="IPR019489">
    <property type="entry name" value="Clp_ATPase_C"/>
</dbReference>
<dbReference type="InterPro" id="IPR004487">
    <property type="entry name" value="Clp_protease_ATP-bd_su_ClpX"/>
</dbReference>
<dbReference type="InterPro" id="IPR046425">
    <property type="entry name" value="ClpX_bact"/>
</dbReference>
<dbReference type="InterPro" id="IPR027417">
    <property type="entry name" value="P-loop_NTPase"/>
</dbReference>
<dbReference type="InterPro" id="IPR010603">
    <property type="entry name" value="Znf_CppX_C4"/>
</dbReference>
<dbReference type="InterPro" id="IPR038366">
    <property type="entry name" value="Znf_CppX_C4_sf"/>
</dbReference>
<dbReference type="NCBIfam" id="TIGR00382">
    <property type="entry name" value="clpX"/>
    <property type="match status" value="1"/>
</dbReference>
<dbReference type="NCBIfam" id="NF003745">
    <property type="entry name" value="PRK05342.1"/>
    <property type="match status" value="1"/>
</dbReference>
<dbReference type="PANTHER" id="PTHR48102:SF7">
    <property type="entry name" value="ATP-DEPENDENT CLP PROTEASE ATP-BINDING SUBUNIT CLPX-LIKE, MITOCHONDRIAL"/>
    <property type="match status" value="1"/>
</dbReference>
<dbReference type="PANTHER" id="PTHR48102">
    <property type="entry name" value="ATP-DEPENDENT CLP PROTEASE ATP-BINDING SUBUNIT CLPX-LIKE, MITOCHONDRIAL-RELATED"/>
    <property type="match status" value="1"/>
</dbReference>
<dbReference type="Pfam" id="PF07724">
    <property type="entry name" value="AAA_2"/>
    <property type="match status" value="1"/>
</dbReference>
<dbReference type="Pfam" id="PF10431">
    <property type="entry name" value="ClpB_D2-small"/>
    <property type="match status" value="1"/>
</dbReference>
<dbReference type="Pfam" id="PF06689">
    <property type="entry name" value="zf-C4_ClpX"/>
    <property type="match status" value="1"/>
</dbReference>
<dbReference type="SMART" id="SM00382">
    <property type="entry name" value="AAA"/>
    <property type="match status" value="1"/>
</dbReference>
<dbReference type="SMART" id="SM01086">
    <property type="entry name" value="ClpB_D2-small"/>
    <property type="match status" value="1"/>
</dbReference>
<dbReference type="SMART" id="SM00994">
    <property type="entry name" value="zf-C4_ClpX"/>
    <property type="match status" value="1"/>
</dbReference>
<dbReference type="SUPFAM" id="SSF57716">
    <property type="entry name" value="Glucocorticoid receptor-like (DNA-binding domain)"/>
    <property type="match status" value="1"/>
</dbReference>
<dbReference type="SUPFAM" id="SSF52540">
    <property type="entry name" value="P-loop containing nucleoside triphosphate hydrolases"/>
    <property type="match status" value="1"/>
</dbReference>
<dbReference type="PROSITE" id="PS51902">
    <property type="entry name" value="CLPX_ZB"/>
    <property type="match status" value="1"/>
</dbReference>
<sequence>MTDKRKDGSGKLLYCSFCGKSQHEVRKLIAGPSVYICDECVDLCNDIIREEIKEVAPHRERSALPTPHEIRTHLDDYVIGQEQAKKVLAVAVYNHYKRLRNGDTSNGVELGKSNILLIGPTGSGKTLLAETLARLLDVPFTMADATTLTEAGYVGEDVENIIQKLLQKCDYDVQKAQRGIVYIDEIDKISRKSDNPSITRDVSGEGVQQALLKLIEGTVAAVPPQGGRKHPQQEFLQVDTSKILFICGGAFAGLDKVIANRVETGSGIGFGATVKAKSDKASEGELLSQVEPEDLIKFGLIPEFIGRLPVVATLNELSEEALIQILKEPKNALTKQYQALFNLEGVDLEFRDEALDAIARKAMARKTGARGLRSIVEAALLDTMYDLPSMEDVEKVVIDESVIAGQSKPLLIYGKPEAQASGE</sequence>
<reference key="1">
    <citation type="journal article" date="2005" name="Nucleic Acids Res.">
        <title>The genome sequence of Salmonella enterica serovar Choleraesuis, a highly invasive and resistant zoonotic pathogen.</title>
        <authorList>
            <person name="Chiu C.-H."/>
            <person name="Tang P."/>
            <person name="Chu C."/>
            <person name="Hu S."/>
            <person name="Bao Q."/>
            <person name="Yu J."/>
            <person name="Chou Y.-Y."/>
            <person name="Wang H.-S."/>
            <person name="Lee Y.-S."/>
        </authorList>
    </citation>
    <scope>NUCLEOTIDE SEQUENCE [LARGE SCALE GENOMIC DNA]</scope>
    <source>
        <strain>SC-B67</strain>
    </source>
</reference>
<gene>
    <name evidence="1" type="primary">clpX</name>
    <name type="ordered locus">SCH_0491</name>
</gene>
<comment type="function">
    <text evidence="1">ATP-dependent specificity component of the Clp protease. It directs the protease to specific substrates. Can perform chaperone functions in the absence of ClpP.</text>
</comment>
<comment type="subunit">
    <text evidence="1">Component of the ClpX-ClpP complex. Forms a hexameric ring that, in the presence of ATP, binds to fourteen ClpP subunits assembled into a disk-like structure with a central cavity, resembling the structure of eukaryotic proteasomes.</text>
</comment>
<comment type="similarity">
    <text evidence="1">Belongs to the ClpX chaperone family.</text>
</comment>
<organism>
    <name type="scientific">Salmonella choleraesuis (strain SC-B67)</name>
    <dbReference type="NCBI Taxonomy" id="321314"/>
    <lineage>
        <taxon>Bacteria</taxon>
        <taxon>Pseudomonadati</taxon>
        <taxon>Pseudomonadota</taxon>
        <taxon>Gammaproteobacteria</taxon>
        <taxon>Enterobacterales</taxon>
        <taxon>Enterobacteriaceae</taxon>
        <taxon>Salmonella</taxon>
    </lineage>
</organism>
<evidence type="ECO:0000255" key="1">
    <source>
        <dbReference type="HAMAP-Rule" id="MF_00175"/>
    </source>
</evidence>
<evidence type="ECO:0000255" key="2">
    <source>
        <dbReference type="PROSITE-ProRule" id="PRU01250"/>
    </source>
</evidence>
<protein>
    <recommendedName>
        <fullName evidence="1">ATP-dependent Clp protease ATP-binding subunit ClpX</fullName>
    </recommendedName>
</protein>